<reference key="1">
    <citation type="journal article" date="2008" name="Mol. Biol. Evol.">
        <title>Functional gene losses occur with minimal size reduction in the plastid genome of the parasitic liverwort Aneura mirabilis.</title>
        <authorList>
            <person name="Wickett N.J."/>
            <person name="Zhang Y."/>
            <person name="Hansen S.K."/>
            <person name="Roper J.M."/>
            <person name="Kuehl J.V."/>
            <person name="Plock S.A."/>
            <person name="Wolf P.G."/>
            <person name="dePamphilis C.W."/>
            <person name="Boore J.L."/>
            <person name="Goffinet B."/>
        </authorList>
    </citation>
    <scope>NUCLEOTIDE SEQUENCE [LARGE SCALE GENOMIC DNA]</scope>
</reference>
<dbReference type="EMBL" id="EU043314">
    <property type="protein sequence ID" value="ABS54508.1"/>
    <property type="molecule type" value="Genomic_DNA"/>
</dbReference>
<dbReference type="RefSeq" id="YP_001687246.1">
    <property type="nucleotide sequence ID" value="NC_010359.1"/>
</dbReference>
<dbReference type="SMR" id="B0YPR0"/>
<dbReference type="GeneID" id="5952192"/>
<dbReference type="GO" id="GO:0005829">
    <property type="term" value="C:cytosol"/>
    <property type="evidence" value="ECO:0007669"/>
    <property type="project" value="TreeGrafter"/>
</dbReference>
<dbReference type="GO" id="GO:0009536">
    <property type="term" value="C:plastid"/>
    <property type="evidence" value="ECO:0007669"/>
    <property type="project" value="UniProtKB-SubCell"/>
</dbReference>
<dbReference type="GO" id="GO:0043022">
    <property type="term" value="F:ribosome binding"/>
    <property type="evidence" value="ECO:0007669"/>
    <property type="project" value="UniProtKB-UniRule"/>
</dbReference>
<dbReference type="GO" id="GO:0019843">
    <property type="term" value="F:rRNA binding"/>
    <property type="evidence" value="ECO:0007669"/>
    <property type="project" value="UniProtKB-UniRule"/>
</dbReference>
<dbReference type="GO" id="GO:0003743">
    <property type="term" value="F:translation initiation factor activity"/>
    <property type="evidence" value="ECO:0007669"/>
    <property type="project" value="UniProtKB-UniRule"/>
</dbReference>
<dbReference type="CDD" id="cd04451">
    <property type="entry name" value="S1_IF1"/>
    <property type="match status" value="1"/>
</dbReference>
<dbReference type="FunFam" id="2.40.50.140:FF:000002">
    <property type="entry name" value="Translation initiation factor IF-1"/>
    <property type="match status" value="1"/>
</dbReference>
<dbReference type="Gene3D" id="2.40.50.140">
    <property type="entry name" value="Nucleic acid-binding proteins"/>
    <property type="match status" value="1"/>
</dbReference>
<dbReference type="HAMAP" id="MF_00075">
    <property type="entry name" value="IF_1"/>
    <property type="match status" value="1"/>
</dbReference>
<dbReference type="InterPro" id="IPR012340">
    <property type="entry name" value="NA-bd_OB-fold"/>
</dbReference>
<dbReference type="InterPro" id="IPR006196">
    <property type="entry name" value="RNA-binding_domain_S1_IF1"/>
</dbReference>
<dbReference type="InterPro" id="IPR004368">
    <property type="entry name" value="TIF_IF1"/>
</dbReference>
<dbReference type="NCBIfam" id="TIGR00008">
    <property type="entry name" value="infA"/>
    <property type="match status" value="1"/>
</dbReference>
<dbReference type="PANTHER" id="PTHR33370">
    <property type="entry name" value="TRANSLATION INITIATION FACTOR IF-1, CHLOROPLASTIC"/>
    <property type="match status" value="1"/>
</dbReference>
<dbReference type="PANTHER" id="PTHR33370:SF1">
    <property type="entry name" value="TRANSLATION INITIATION FACTOR IF-1, CHLOROPLASTIC"/>
    <property type="match status" value="1"/>
</dbReference>
<dbReference type="Pfam" id="PF01176">
    <property type="entry name" value="eIF-1a"/>
    <property type="match status" value="1"/>
</dbReference>
<dbReference type="SUPFAM" id="SSF50249">
    <property type="entry name" value="Nucleic acid-binding proteins"/>
    <property type="match status" value="1"/>
</dbReference>
<dbReference type="PROSITE" id="PS50832">
    <property type="entry name" value="S1_IF1_TYPE"/>
    <property type="match status" value="1"/>
</dbReference>
<feature type="chain" id="PRO_0000338955" description="Translation initiation factor IF-1, plastid">
    <location>
        <begin position="1"/>
        <end position="78"/>
    </location>
</feature>
<feature type="domain" description="S1-like" evidence="1">
    <location>
        <begin position="1"/>
        <end position="72"/>
    </location>
</feature>
<evidence type="ECO:0000255" key="1">
    <source>
        <dbReference type="HAMAP-Rule" id="MF_00075"/>
    </source>
</evidence>
<protein>
    <recommendedName>
        <fullName evidence="1">Translation initiation factor IF-1, plastid</fullName>
    </recommendedName>
</protein>
<proteinExistence type="inferred from homology"/>
<sequence length="78" mass="8955">MKKQDLIDMEGVVTESLPNAMFRVCLDNGCQVLTHISGRIRRNYIRILPGDRVRVESSPYDLTKGRITYRLRAKSSTD</sequence>
<accession>B0YPR0</accession>
<geneLocation type="non-photosynthetic plastid"/>
<gene>
    <name evidence="1" type="primary">infA</name>
</gene>
<name>IF1C_ANEMR</name>
<comment type="function">
    <text evidence="1">One of the essential components for the initiation of protein synthesis. Stabilizes the binding of IF-2 and IF-3 on the 30S subunit to which N-formylmethionyl-tRNA(fMet) subsequently binds. Helps modulate mRNA selection, yielding the 30S pre-initiation complex (PIC). Upon addition of the 50S ribosomal subunit IF-1, IF-2 and IF-3 are released leaving the mature 70S translation initiation complex.</text>
</comment>
<comment type="subunit">
    <text evidence="1">Component of the 30S ribosomal translation pre-initiation complex which assembles on the 30S ribosome in the order IF-2 and IF-3, IF-1 and N-formylmethionyl-tRNA(fMet); mRNA recruitment can occur at any time during PIC assembly.</text>
</comment>
<comment type="subcellular location">
    <subcellularLocation>
        <location evidence="1">Plastid</location>
    </subcellularLocation>
</comment>
<comment type="similarity">
    <text evidence="1">Belongs to the IF-1 family.</text>
</comment>
<keyword id="KW-0396">Initiation factor</keyword>
<keyword id="KW-0934">Plastid</keyword>
<keyword id="KW-0648">Protein biosynthesis</keyword>
<keyword id="KW-0694">RNA-binding</keyword>
<keyword id="KW-0699">rRNA-binding</keyword>
<organism>
    <name type="scientific">Aneura mirabilis</name>
    <name type="common">Parasitic liverwort</name>
    <name type="synonym">Cryptothallus mirabilis</name>
    <dbReference type="NCBI Taxonomy" id="280810"/>
    <lineage>
        <taxon>Eukaryota</taxon>
        <taxon>Viridiplantae</taxon>
        <taxon>Streptophyta</taxon>
        <taxon>Embryophyta</taxon>
        <taxon>Marchantiophyta</taxon>
        <taxon>Jungermanniopsida</taxon>
        <taxon>Metzgeriidae</taxon>
        <taxon>Metzgeriales</taxon>
        <taxon>Aneuraceae</taxon>
        <taxon>Aneura</taxon>
    </lineage>
</organism>